<sequence length="326" mass="34864">MLTFARQQQRRNVRWLLSLSLLVLLATLLSLCAGEQWIAPGDWLSARGELFVWQIRLPRTLAVLLVGAALALSGAVMQALFENPLAEPGLLGVSNGAGVGLIAAVLLGQGQLPGWALGLCAIAGALIITLILLRFARRHLSTSRLLLAGVALGIICSALMTWAIYFSTSFDLRQLMYWMMGGFGGVDWQQSWLMIALIPVLIWICCQSQPLNMLALGETSARQLGLPLWLWRNLLVIATGWMVGVSVAMAGAIGFIGLVIPHILRLCGLTDHRVLLPGCALAGAIALLLADVVARLALASAELPIGVVTATLGAPVFIWLLLKSAR</sequence>
<protein>
    <recommendedName>
        <fullName evidence="1">Vitamin B12 import system permease protein BtuC</fullName>
    </recommendedName>
</protein>
<comment type="function">
    <text evidence="1">Part of the ABC transporter complex BtuCDF involved in vitamin B12 import. Involved in the translocation of the substrate across the membrane.</text>
</comment>
<comment type="subunit">
    <text evidence="1">The complex is composed of two ATP-binding proteins (BtuD), two transmembrane proteins (BtuC) and a solute-binding protein (BtuF).</text>
</comment>
<comment type="subcellular location">
    <subcellularLocation>
        <location evidence="1">Cell inner membrane</location>
        <topology evidence="1">Multi-pass membrane protein</topology>
    </subcellularLocation>
</comment>
<comment type="similarity">
    <text evidence="1">Belongs to the binding-protein-dependent transport system permease family. FecCD subfamily.</text>
</comment>
<name>BTUC_SALTI</name>
<accession>Q8Z6I5</accession>
<dbReference type="EMBL" id="AL513382">
    <property type="protein sequence ID" value="CAD02012.1"/>
    <property type="molecule type" value="Genomic_DNA"/>
</dbReference>
<dbReference type="EMBL" id="AE014613">
    <property type="protein sequence ID" value="AAO68876.1"/>
    <property type="molecule type" value="Genomic_DNA"/>
</dbReference>
<dbReference type="RefSeq" id="NP_456171.1">
    <property type="nucleotide sequence ID" value="NC_003198.1"/>
</dbReference>
<dbReference type="RefSeq" id="WP_000954986.1">
    <property type="nucleotide sequence ID" value="NZ_WSUR01000011.1"/>
</dbReference>
<dbReference type="SMR" id="Q8Z6I5"/>
<dbReference type="STRING" id="220341.gene:17585704"/>
<dbReference type="KEGG" id="stt:t1221"/>
<dbReference type="KEGG" id="sty:STY1770"/>
<dbReference type="PATRIC" id="fig|220341.7.peg.1782"/>
<dbReference type="eggNOG" id="COG4139">
    <property type="taxonomic scope" value="Bacteria"/>
</dbReference>
<dbReference type="HOGENOM" id="CLU_013016_0_3_6"/>
<dbReference type="OMA" id="SVAMRGW"/>
<dbReference type="OrthoDB" id="9055647at2"/>
<dbReference type="Proteomes" id="UP000000541">
    <property type="component" value="Chromosome"/>
</dbReference>
<dbReference type="Proteomes" id="UP000002670">
    <property type="component" value="Chromosome"/>
</dbReference>
<dbReference type="GO" id="GO:0005886">
    <property type="term" value="C:plasma membrane"/>
    <property type="evidence" value="ECO:0007669"/>
    <property type="project" value="UniProtKB-SubCell"/>
</dbReference>
<dbReference type="GO" id="GO:0090482">
    <property type="term" value="F:vitamin transmembrane transporter activity"/>
    <property type="evidence" value="ECO:0007669"/>
    <property type="project" value="UniProtKB-UniRule"/>
</dbReference>
<dbReference type="GO" id="GO:0015889">
    <property type="term" value="P:cobalamin transport"/>
    <property type="evidence" value="ECO:0007669"/>
    <property type="project" value="UniProtKB-UniRule"/>
</dbReference>
<dbReference type="CDD" id="cd06550">
    <property type="entry name" value="TM_ABC_iron-siderophores_like"/>
    <property type="match status" value="1"/>
</dbReference>
<dbReference type="FunFam" id="1.10.3470.10:FF:000001">
    <property type="entry name" value="Vitamin B12 ABC transporter permease BtuC"/>
    <property type="match status" value="1"/>
</dbReference>
<dbReference type="Gene3D" id="1.10.3470.10">
    <property type="entry name" value="ABC transporter involved in vitamin B12 uptake, BtuC"/>
    <property type="match status" value="1"/>
</dbReference>
<dbReference type="HAMAP" id="MF_01004">
    <property type="entry name" value="BtuC"/>
    <property type="match status" value="1"/>
</dbReference>
<dbReference type="InterPro" id="IPR037294">
    <property type="entry name" value="ABC_BtuC-like"/>
</dbReference>
<dbReference type="InterPro" id="IPR023691">
    <property type="entry name" value="ABC_transptr_BtuC"/>
</dbReference>
<dbReference type="InterPro" id="IPR000522">
    <property type="entry name" value="ABC_transptr_permease_BtuC"/>
</dbReference>
<dbReference type="NCBIfam" id="NF003001">
    <property type="entry name" value="PRK03784.1"/>
    <property type="match status" value="1"/>
</dbReference>
<dbReference type="PANTHER" id="PTHR30472">
    <property type="entry name" value="FERRIC ENTEROBACTIN TRANSPORT SYSTEM PERMEASE PROTEIN"/>
    <property type="match status" value="1"/>
</dbReference>
<dbReference type="PANTHER" id="PTHR30472:SF29">
    <property type="entry name" value="VITAMIN B12 IMPORT SYSTEM PERMEASE PROTEIN BTUC"/>
    <property type="match status" value="1"/>
</dbReference>
<dbReference type="Pfam" id="PF01032">
    <property type="entry name" value="FecCD"/>
    <property type="match status" value="1"/>
</dbReference>
<dbReference type="SUPFAM" id="SSF81345">
    <property type="entry name" value="ABC transporter involved in vitamin B12 uptake, BtuC"/>
    <property type="match status" value="1"/>
</dbReference>
<evidence type="ECO:0000255" key="1">
    <source>
        <dbReference type="HAMAP-Rule" id="MF_01004"/>
    </source>
</evidence>
<proteinExistence type="inferred from homology"/>
<reference key="1">
    <citation type="journal article" date="2001" name="Nature">
        <title>Complete genome sequence of a multiple drug resistant Salmonella enterica serovar Typhi CT18.</title>
        <authorList>
            <person name="Parkhill J."/>
            <person name="Dougan G."/>
            <person name="James K.D."/>
            <person name="Thomson N.R."/>
            <person name="Pickard D."/>
            <person name="Wain J."/>
            <person name="Churcher C.M."/>
            <person name="Mungall K.L."/>
            <person name="Bentley S.D."/>
            <person name="Holden M.T.G."/>
            <person name="Sebaihia M."/>
            <person name="Baker S."/>
            <person name="Basham D."/>
            <person name="Brooks K."/>
            <person name="Chillingworth T."/>
            <person name="Connerton P."/>
            <person name="Cronin A."/>
            <person name="Davis P."/>
            <person name="Davies R.M."/>
            <person name="Dowd L."/>
            <person name="White N."/>
            <person name="Farrar J."/>
            <person name="Feltwell T."/>
            <person name="Hamlin N."/>
            <person name="Haque A."/>
            <person name="Hien T.T."/>
            <person name="Holroyd S."/>
            <person name="Jagels K."/>
            <person name="Krogh A."/>
            <person name="Larsen T.S."/>
            <person name="Leather S."/>
            <person name="Moule S."/>
            <person name="O'Gaora P."/>
            <person name="Parry C."/>
            <person name="Quail M.A."/>
            <person name="Rutherford K.M."/>
            <person name="Simmonds M."/>
            <person name="Skelton J."/>
            <person name="Stevens K."/>
            <person name="Whitehead S."/>
            <person name="Barrell B.G."/>
        </authorList>
    </citation>
    <scope>NUCLEOTIDE SEQUENCE [LARGE SCALE GENOMIC DNA]</scope>
    <source>
        <strain>CT18</strain>
    </source>
</reference>
<reference key="2">
    <citation type="journal article" date="2003" name="J. Bacteriol.">
        <title>Comparative genomics of Salmonella enterica serovar Typhi strains Ty2 and CT18.</title>
        <authorList>
            <person name="Deng W."/>
            <person name="Liou S.-R."/>
            <person name="Plunkett G. III"/>
            <person name="Mayhew G.F."/>
            <person name="Rose D.J."/>
            <person name="Burland V."/>
            <person name="Kodoyianni V."/>
            <person name="Schwartz D.C."/>
            <person name="Blattner F.R."/>
        </authorList>
    </citation>
    <scope>NUCLEOTIDE SEQUENCE [LARGE SCALE GENOMIC DNA]</scope>
    <source>
        <strain>ATCC 700931 / Ty2</strain>
    </source>
</reference>
<organism>
    <name type="scientific">Salmonella typhi</name>
    <dbReference type="NCBI Taxonomy" id="90370"/>
    <lineage>
        <taxon>Bacteria</taxon>
        <taxon>Pseudomonadati</taxon>
        <taxon>Pseudomonadota</taxon>
        <taxon>Gammaproteobacteria</taxon>
        <taxon>Enterobacterales</taxon>
        <taxon>Enterobacteriaceae</taxon>
        <taxon>Salmonella</taxon>
    </lineage>
</organism>
<gene>
    <name evidence="1" type="primary">btuC</name>
    <name type="ordered locus">STY1770</name>
    <name type="ordered locus">t1221</name>
</gene>
<keyword id="KW-0997">Cell inner membrane</keyword>
<keyword id="KW-1003">Cell membrane</keyword>
<keyword id="KW-0472">Membrane</keyword>
<keyword id="KW-0812">Transmembrane</keyword>
<keyword id="KW-1133">Transmembrane helix</keyword>
<keyword id="KW-0813">Transport</keyword>
<feature type="chain" id="PRO_0000059976" description="Vitamin B12 import system permease protein BtuC">
    <location>
        <begin position="1"/>
        <end position="326"/>
    </location>
</feature>
<feature type="transmembrane region" description="Helical" evidence="1">
    <location>
        <begin position="17"/>
        <end position="39"/>
    </location>
</feature>
<feature type="transmembrane region" description="Helical" evidence="1">
    <location>
        <begin position="59"/>
        <end position="81"/>
    </location>
</feature>
<feature type="transmembrane region" description="Helical" evidence="1">
    <location>
        <begin position="88"/>
        <end position="107"/>
    </location>
</feature>
<feature type="transmembrane region" description="Helical" evidence="1">
    <location>
        <begin position="111"/>
        <end position="133"/>
    </location>
</feature>
<feature type="transmembrane region" description="Helical" evidence="1">
    <location>
        <begin position="146"/>
        <end position="168"/>
    </location>
</feature>
<feature type="transmembrane region" description="Helical" evidence="1">
    <location>
        <begin position="188"/>
        <end position="205"/>
    </location>
</feature>
<feature type="transmembrane region" description="Helical" evidence="1">
    <location>
        <begin position="242"/>
        <end position="264"/>
    </location>
</feature>
<feature type="transmembrane region" description="Helical" evidence="1">
    <location>
        <begin position="274"/>
        <end position="296"/>
    </location>
</feature>
<feature type="transmembrane region" description="Helical" evidence="1">
    <location>
        <begin position="303"/>
        <end position="322"/>
    </location>
</feature>